<feature type="chain" id="PRO_1000187858" description="Beta-ketoacyl-[acyl-carrier-protein] synthase III">
    <location>
        <begin position="1"/>
        <end position="323"/>
    </location>
</feature>
<feature type="region of interest" description="ACP-binding" evidence="1">
    <location>
        <begin position="250"/>
        <end position="254"/>
    </location>
</feature>
<feature type="active site" evidence="1">
    <location>
        <position position="112"/>
    </location>
</feature>
<feature type="active site" evidence="1">
    <location>
        <position position="249"/>
    </location>
</feature>
<feature type="active site" evidence="1">
    <location>
        <position position="279"/>
    </location>
</feature>
<evidence type="ECO:0000255" key="1">
    <source>
        <dbReference type="HAMAP-Rule" id="MF_01815"/>
    </source>
</evidence>
<comment type="function">
    <text evidence="1">Catalyzes the condensation reaction of fatty acid synthesis by the addition to an acyl acceptor of two carbons from malonyl-ACP. Catalyzes the first condensation reaction which initiates fatty acid synthesis and may therefore play a role in governing the total rate of fatty acid production. Possesses both acetoacetyl-ACP synthase and acetyl transacylase activities. Its substrate specificity determines the biosynthesis of branched-chain and/or straight-chain of fatty acids.</text>
</comment>
<comment type="catalytic activity">
    <reaction evidence="1">
        <text>malonyl-[ACP] + acetyl-CoA + H(+) = 3-oxobutanoyl-[ACP] + CO2 + CoA</text>
        <dbReference type="Rhea" id="RHEA:12080"/>
        <dbReference type="Rhea" id="RHEA-COMP:9623"/>
        <dbReference type="Rhea" id="RHEA-COMP:9625"/>
        <dbReference type="ChEBI" id="CHEBI:15378"/>
        <dbReference type="ChEBI" id="CHEBI:16526"/>
        <dbReference type="ChEBI" id="CHEBI:57287"/>
        <dbReference type="ChEBI" id="CHEBI:57288"/>
        <dbReference type="ChEBI" id="CHEBI:78449"/>
        <dbReference type="ChEBI" id="CHEBI:78450"/>
        <dbReference type="EC" id="2.3.1.180"/>
    </reaction>
</comment>
<comment type="pathway">
    <text evidence="1">Lipid metabolism; fatty acid biosynthesis.</text>
</comment>
<comment type="subunit">
    <text evidence="1">Homodimer.</text>
</comment>
<comment type="subcellular location">
    <subcellularLocation>
        <location evidence="1">Cytoplasm</location>
    </subcellularLocation>
</comment>
<comment type="domain">
    <text evidence="1">The last Arg residue of the ACP-binding site is essential for the weak association between ACP/AcpP and FabH.</text>
</comment>
<comment type="similarity">
    <text evidence="1">Belongs to the thiolase-like superfamily. FabH family.</text>
</comment>
<name>FABH_CLOK1</name>
<proteinExistence type="inferred from homology"/>
<protein>
    <recommendedName>
        <fullName evidence="1">Beta-ketoacyl-[acyl-carrier-protein] synthase III</fullName>
        <shortName evidence="1">Beta-ketoacyl-ACP synthase III</shortName>
        <shortName evidence="1">KAS III</shortName>
        <ecNumber evidence="1">2.3.1.180</ecNumber>
    </recommendedName>
    <alternativeName>
        <fullName evidence="1">3-oxoacyl-[acyl-carrier-protein] synthase 3</fullName>
    </alternativeName>
    <alternativeName>
        <fullName evidence="1">3-oxoacyl-[acyl-carrier-protein] synthase III</fullName>
    </alternativeName>
</protein>
<reference key="1">
    <citation type="submission" date="2005-09" db="EMBL/GenBank/DDBJ databases">
        <title>Complete genome sequence of Clostridium kluyveri and comparative genomics of Clostridia species.</title>
        <authorList>
            <person name="Inui M."/>
            <person name="Nonaka H."/>
            <person name="Shinoda Y."/>
            <person name="Ikenaga Y."/>
            <person name="Abe M."/>
            <person name="Naito K."/>
            <person name="Vertes A.A."/>
            <person name="Yukawa H."/>
        </authorList>
    </citation>
    <scope>NUCLEOTIDE SEQUENCE [LARGE SCALE GENOMIC DNA]</scope>
    <source>
        <strain>NBRC 12016</strain>
    </source>
</reference>
<dbReference type="EC" id="2.3.1.180" evidence="1"/>
<dbReference type="EMBL" id="AP009049">
    <property type="protein sequence ID" value="BAH05129.1"/>
    <property type="molecule type" value="Genomic_DNA"/>
</dbReference>
<dbReference type="RefSeq" id="WP_011988698.1">
    <property type="nucleotide sequence ID" value="NC_011837.1"/>
</dbReference>
<dbReference type="SMR" id="B9DY04"/>
<dbReference type="KEGG" id="ckr:CKR_0078"/>
<dbReference type="HOGENOM" id="CLU_039592_3_1_9"/>
<dbReference type="UniPathway" id="UPA00094"/>
<dbReference type="Proteomes" id="UP000007969">
    <property type="component" value="Chromosome"/>
</dbReference>
<dbReference type="GO" id="GO:0005737">
    <property type="term" value="C:cytoplasm"/>
    <property type="evidence" value="ECO:0007669"/>
    <property type="project" value="UniProtKB-SubCell"/>
</dbReference>
<dbReference type="GO" id="GO:0004315">
    <property type="term" value="F:3-oxoacyl-[acyl-carrier-protein] synthase activity"/>
    <property type="evidence" value="ECO:0007669"/>
    <property type="project" value="InterPro"/>
</dbReference>
<dbReference type="GO" id="GO:0033818">
    <property type="term" value="F:beta-ketoacyl-acyl-carrier-protein synthase III activity"/>
    <property type="evidence" value="ECO:0007669"/>
    <property type="project" value="UniProtKB-UniRule"/>
</dbReference>
<dbReference type="GO" id="GO:0006633">
    <property type="term" value="P:fatty acid biosynthetic process"/>
    <property type="evidence" value="ECO:0007669"/>
    <property type="project" value="UniProtKB-UniRule"/>
</dbReference>
<dbReference type="GO" id="GO:0044550">
    <property type="term" value="P:secondary metabolite biosynthetic process"/>
    <property type="evidence" value="ECO:0007669"/>
    <property type="project" value="TreeGrafter"/>
</dbReference>
<dbReference type="CDD" id="cd00830">
    <property type="entry name" value="KAS_III"/>
    <property type="match status" value="1"/>
</dbReference>
<dbReference type="FunFam" id="3.40.47.10:FF:000004">
    <property type="entry name" value="3-oxoacyl-[acyl-carrier-protein] synthase 3"/>
    <property type="match status" value="1"/>
</dbReference>
<dbReference type="Gene3D" id="3.40.47.10">
    <property type="match status" value="1"/>
</dbReference>
<dbReference type="HAMAP" id="MF_01815">
    <property type="entry name" value="FabH"/>
    <property type="match status" value="1"/>
</dbReference>
<dbReference type="InterPro" id="IPR013747">
    <property type="entry name" value="ACP_syn_III_C"/>
</dbReference>
<dbReference type="InterPro" id="IPR013751">
    <property type="entry name" value="ACP_syn_III_N"/>
</dbReference>
<dbReference type="InterPro" id="IPR004655">
    <property type="entry name" value="FabH"/>
</dbReference>
<dbReference type="InterPro" id="IPR016039">
    <property type="entry name" value="Thiolase-like"/>
</dbReference>
<dbReference type="NCBIfam" id="TIGR00747">
    <property type="entry name" value="fabH"/>
    <property type="match status" value="1"/>
</dbReference>
<dbReference type="NCBIfam" id="NF006829">
    <property type="entry name" value="PRK09352.1"/>
    <property type="match status" value="1"/>
</dbReference>
<dbReference type="PANTHER" id="PTHR34069">
    <property type="entry name" value="3-OXOACYL-[ACYL-CARRIER-PROTEIN] SYNTHASE 3"/>
    <property type="match status" value="1"/>
</dbReference>
<dbReference type="PANTHER" id="PTHR34069:SF2">
    <property type="entry name" value="BETA-KETOACYL-[ACYL-CARRIER-PROTEIN] SYNTHASE III"/>
    <property type="match status" value="1"/>
</dbReference>
<dbReference type="Pfam" id="PF08545">
    <property type="entry name" value="ACP_syn_III"/>
    <property type="match status" value="1"/>
</dbReference>
<dbReference type="Pfam" id="PF08541">
    <property type="entry name" value="ACP_syn_III_C"/>
    <property type="match status" value="1"/>
</dbReference>
<dbReference type="SUPFAM" id="SSF53901">
    <property type="entry name" value="Thiolase-like"/>
    <property type="match status" value="1"/>
</dbReference>
<sequence length="323" mass="35019">MNKVEIAGLGSYVPPKILDNNDLSLIVDTNDEWIRCRTGIRQRRISQGENTSEMATKAAINAMKSANIKAEDIDLIVVATITPDNFIPSTACIVQKNIKAVNATCFDISAACSGLIYGLDIGTQFIRSGRFKVVLAIGAETLSKILNWQDRSTCILFGDGAAAAILQMGEEESILSMYTGSDGFQGDALTCPAVPVNNPCTTSDFQKSVVTMDGKAIFKFAVKILVKSVKMLLKEQEVTLEEIKYIIPHQANYRIIECAAKILKVDIDKFYINLDLYGNTSAASVGIALDEVYKKNLVEKGDKVLIIGFGGGLTYGGLLINVI</sequence>
<keyword id="KW-0012">Acyltransferase</keyword>
<keyword id="KW-0963">Cytoplasm</keyword>
<keyword id="KW-0275">Fatty acid biosynthesis</keyword>
<keyword id="KW-0276">Fatty acid metabolism</keyword>
<keyword id="KW-0444">Lipid biosynthesis</keyword>
<keyword id="KW-0443">Lipid metabolism</keyword>
<keyword id="KW-0511">Multifunctional enzyme</keyword>
<keyword id="KW-0808">Transferase</keyword>
<gene>
    <name evidence="1" type="primary">fabH</name>
    <name type="ordered locus">CKR_0078</name>
</gene>
<accession>B9DY04</accession>
<organism>
    <name type="scientific">Clostridium kluyveri (strain NBRC 12016)</name>
    <dbReference type="NCBI Taxonomy" id="583346"/>
    <lineage>
        <taxon>Bacteria</taxon>
        <taxon>Bacillati</taxon>
        <taxon>Bacillota</taxon>
        <taxon>Clostridia</taxon>
        <taxon>Eubacteriales</taxon>
        <taxon>Clostridiaceae</taxon>
        <taxon>Clostridium</taxon>
    </lineage>
</organism>